<evidence type="ECO:0000255" key="1">
    <source>
        <dbReference type="HAMAP-Rule" id="MF_00385"/>
    </source>
</evidence>
<evidence type="ECO:0000305" key="2"/>
<feature type="chain" id="PRO_0000167315" description="Small ribosomal subunit protein bS16c">
    <location>
        <begin position="1"/>
        <end position="82"/>
    </location>
</feature>
<comment type="subcellular location">
    <subcellularLocation>
        <location>Plastid</location>
        <location>Chloroplast</location>
    </subcellularLocation>
</comment>
<comment type="similarity">
    <text evidence="1">Belongs to the bacterial ribosomal protein bS16 family.</text>
</comment>
<sequence>MVKLRLKRYGRKQQPSYRIVAMDSRSKRDGKAIEELGFYNPITNETRIDIAKILKRLKQGAQTTRTVKNILNEAQIIAKENS</sequence>
<keyword id="KW-0150">Chloroplast</keyword>
<keyword id="KW-0934">Plastid</keyword>
<keyword id="KW-0687">Ribonucleoprotein</keyword>
<keyword id="KW-0689">Ribosomal protein</keyword>
<dbReference type="EMBL" id="U38804">
    <property type="protein sequence ID" value="AAC08238.1"/>
    <property type="molecule type" value="Genomic_DNA"/>
</dbReference>
<dbReference type="PIR" id="S73273">
    <property type="entry name" value="S73273"/>
</dbReference>
<dbReference type="RefSeq" id="NP_053962.1">
    <property type="nucleotide sequence ID" value="NC_000925.1"/>
</dbReference>
<dbReference type="SMR" id="P51352"/>
<dbReference type="GeneID" id="809988"/>
<dbReference type="GO" id="GO:0009507">
    <property type="term" value="C:chloroplast"/>
    <property type="evidence" value="ECO:0007669"/>
    <property type="project" value="UniProtKB-SubCell"/>
</dbReference>
<dbReference type="GO" id="GO:0005739">
    <property type="term" value="C:mitochondrion"/>
    <property type="evidence" value="ECO:0007669"/>
    <property type="project" value="GOC"/>
</dbReference>
<dbReference type="GO" id="GO:0015935">
    <property type="term" value="C:small ribosomal subunit"/>
    <property type="evidence" value="ECO:0007669"/>
    <property type="project" value="TreeGrafter"/>
</dbReference>
<dbReference type="GO" id="GO:0003735">
    <property type="term" value="F:structural constituent of ribosome"/>
    <property type="evidence" value="ECO:0007669"/>
    <property type="project" value="InterPro"/>
</dbReference>
<dbReference type="GO" id="GO:0032543">
    <property type="term" value="P:mitochondrial translation"/>
    <property type="evidence" value="ECO:0007669"/>
    <property type="project" value="TreeGrafter"/>
</dbReference>
<dbReference type="Gene3D" id="3.30.1320.10">
    <property type="match status" value="1"/>
</dbReference>
<dbReference type="HAMAP" id="MF_00385">
    <property type="entry name" value="Ribosomal_bS16"/>
    <property type="match status" value="1"/>
</dbReference>
<dbReference type="InterPro" id="IPR000307">
    <property type="entry name" value="Ribosomal_bS16"/>
</dbReference>
<dbReference type="InterPro" id="IPR020592">
    <property type="entry name" value="Ribosomal_bS16_CS"/>
</dbReference>
<dbReference type="InterPro" id="IPR023803">
    <property type="entry name" value="Ribosomal_bS16_dom_sf"/>
</dbReference>
<dbReference type="NCBIfam" id="TIGR00002">
    <property type="entry name" value="S16"/>
    <property type="match status" value="1"/>
</dbReference>
<dbReference type="PANTHER" id="PTHR12919">
    <property type="entry name" value="30S RIBOSOMAL PROTEIN S16"/>
    <property type="match status" value="1"/>
</dbReference>
<dbReference type="PANTHER" id="PTHR12919:SF20">
    <property type="entry name" value="SMALL RIBOSOMAL SUBUNIT PROTEIN BS16M"/>
    <property type="match status" value="1"/>
</dbReference>
<dbReference type="Pfam" id="PF00886">
    <property type="entry name" value="Ribosomal_S16"/>
    <property type="match status" value="1"/>
</dbReference>
<dbReference type="SUPFAM" id="SSF54565">
    <property type="entry name" value="Ribosomal protein S16"/>
    <property type="match status" value="1"/>
</dbReference>
<dbReference type="PROSITE" id="PS00732">
    <property type="entry name" value="RIBOSOMAL_S16"/>
    <property type="match status" value="1"/>
</dbReference>
<protein>
    <recommendedName>
        <fullName evidence="1">Small ribosomal subunit protein bS16c</fullName>
    </recommendedName>
    <alternativeName>
        <fullName evidence="2">30S ribosomal protein S16, chloroplastic</fullName>
    </alternativeName>
</protein>
<organism>
    <name type="scientific">Porphyra purpurea</name>
    <name type="common">Red seaweed</name>
    <name type="synonym">Ulva purpurea</name>
    <dbReference type="NCBI Taxonomy" id="2787"/>
    <lineage>
        <taxon>Eukaryota</taxon>
        <taxon>Rhodophyta</taxon>
        <taxon>Bangiophyceae</taxon>
        <taxon>Bangiales</taxon>
        <taxon>Bangiaceae</taxon>
        <taxon>Porphyra</taxon>
    </lineage>
</organism>
<proteinExistence type="inferred from homology"/>
<geneLocation type="chloroplast"/>
<reference key="1">
    <citation type="journal article" date="1995" name="Plant Mol. Biol. Rep.">
        <title>Complete nucleotide sequence of the Porphyra purpurea chloroplast genome.</title>
        <authorList>
            <person name="Reith M.E."/>
            <person name="Munholland J."/>
        </authorList>
    </citation>
    <scope>NUCLEOTIDE SEQUENCE [LARGE SCALE GENOMIC DNA]</scope>
    <source>
        <strain>Avonport</strain>
    </source>
</reference>
<gene>
    <name evidence="1" type="primary">rps16</name>
</gene>
<name>RR16_PORPU</name>
<accession>P51352</accession>